<keyword id="KW-0687">Ribonucleoprotein</keyword>
<keyword id="KW-0689">Ribosomal protein</keyword>
<keyword id="KW-0694">RNA-binding</keyword>
<keyword id="KW-0699">rRNA-binding</keyword>
<accession>Q02T77</accession>
<evidence type="ECO:0000255" key="1">
    <source>
        <dbReference type="HAMAP-Rule" id="MF_01320"/>
    </source>
</evidence>
<evidence type="ECO:0000256" key="2">
    <source>
        <dbReference type="SAM" id="MobiDB-lite"/>
    </source>
</evidence>
<evidence type="ECO:0000305" key="3"/>
<dbReference type="EMBL" id="CP000438">
    <property type="protein sequence ID" value="ABJ13531.1"/>
    <property type="molecule type" value="Genomic_DNA"/>
</dbReference>
<dbReference type="RefSeq" id="WP_003103878.1">
    <property type="nucleotide sequence ID" value="NZ_CP034244.1"/>
</dbReference>
<dbReference type="SMR" id="Q02T77"/>
<dbReference type="GeneID" id="77219201"/>
<dbReference type="KEGG" id="pau:PA14_08880"/>
<dbReference type="PseudoCAP" id="PA14_08880"/>
<dbReference type="HOGENOM" id="CLU_036235_2_1_6"/>
<dbReference type="BioCyc" id="PAER208963:G1G74-739-MONOMER"/>
<dbReference type="Proteomes" id="UP000000653">
    <property type="component" value="Chromosome"/>
</dbReference>
<dbReference type="GO" id="GO:0015934">
    <property type="term" value="C:large ribosomal subunit"/>
    <property type="evidence" value="ECO:0007669"/>
    <property type="project" value="InterPro"/>
</dbReference>
<dbReference type="GO" id="GO:0019843">
    <property type="term" value="F:rRNA binding"/>
    <property type="evidence" value="ECO:0007669"/>
    <property type="project" value="UniProtKB-UniRule"/>
</dbReference>
<dbReference type="GO" id="GO:0003735">
    <property type="term" value="F:structural constituent of ribosome"/>
    <property type="evidence" value="ECO:0007669"/>
    <property type="project" value="InterPro"/>
</dbReference>
<dbReference type="GO" id="GO:0016740">
    <property type="term" value="F:transferase activity"/>
    <property type="evidence" value="ECO:0007669"/>
    <property type="project" value="InterPro"/>
</dbReference>
<dbReference type="GO" id="GO:0002181">
    <property type="term" value="P:cytoplasmic translation"/>
    <property type="evidence" value="ECO:0007669"/>
    <property type="project" value="TreeGrafter"/>
</dbReference>
<dbReference type="FunFam" id="2.30.30.30:FF:000001">
    <property type="entry name" value="50S ribosomal protein L2"/>
    <property type="match status" value="1"/>
</dbReference>
<dbReference type="FunFam" id="2.40.50.140:FF:000003">
    <property type="entry name" value="50S ribosomal protein L2"/>
    <property type="match status" value="1"/>
</dbReference>
<dbReference type="FunFam" id="4.10.950.10:FF:000001">
    <property type="entry name" value="50S ribosomal protein L2"/>
    <property type="match status" value="1"/>
</dbReference>
<dbReference type="Gene3D" id="2.30.30.30">
    <property type="match status" value="1"/>
</dbReference>
<dbReference type="Gene3D" id="2.40.50.140">
    <property type="entry name" value="Nucleic acid-binding proteins"/>
    <property type="match status" value="1"/>
</dbReference>
<dbReference type="Gene3D" id="4.10.950.10">
    <property type="entry name" value="Ribosomal protein L2, domain 3"/>
    <property type="match status" value="1"/>
</dbReference>
<dbReference type="HAMAP" id="MF_01320_B">
    <property type="entry name" value="Ribosomal_uL2_B"/>
    <property type="match status" value="1"/>
</dbReference>
<dbReference type="InterPro" id="IPR012340">
    <property type="entry name" value="NA-bd_OB-fold"/>
</dbReference>
<dbReference type="InterPro" id="IPR014722">
    <property type="entry name" value="Rib_uL2_dom2"/>
</dbReference>
<dbReference type="InterPro" id="IPR002171">
    <property type="entry name" value="Ribosomal_uL2"/>
</dbReference>
<dbReference type="InterPro" id="IPR005880">
    <property type="entry name" value="Ribosomal_uL2_bac/org-type"/>
</dbReference>
<dbReference type="InterPro" id="IPR022669">
    <property type="entry name" value="Ribosomal_uL2_C"/>
</dbReference>
<dbReference type="InterPro" id="IPR022671">
    <property type="entry name" value="Ribosomal_uL2_CS"/>
</dbReference>
<dbReference type="InterPro" id="IPR014726">
    <property type="entry name" value="Ribosomal_uL2_dom3"/>
</dbReference>
<dbReference type="InterPro" id="IPR022666">
    <property type="entry name" value="Ribosomal_uL2_RNA-bd_dom"/>
</dbReference>
<dbReference type="InterPro" id="IPR008991">
    <property type="entry name" value="Translation_prot_SH3-like_sf"/>
</dbReference>
<dbReference type="NCBIfam" id="TIGR01171">
    <property type="entry name" value="rplB_bact"/>
    <property type="match status" value="1"/>
</dbReference>
<dbReference type="PANTHER" id="PTHR13691:SF5">
    <property type="entry name" value="LARGE RIBOSOMAL SUBUNIT PROTEIN UL2M"/>
    <property type="match status" value="1"/>
</dbReference>
<dbReference type="PANTHER" id="PTHR13691">
    <property type="entry name" value="RIBOSOMAL PROTEIN L2"/>
    <property type="match status" value="1"/>
</dbReference>
<dbReference type="Pfam" id="PF00181">
    <property type="entry name" value="Ribosomal_L2"/>
    <property type="match status" value="1"/>
</dbReference>
<dbReference type="Pfam" id="PF03947">
    <property type="entry name" value="Ribosomal_L2_C"/>
    <property type="match status" value="1"/>
</dbReference>
<dbReference type="PIRSF" id="PIRSF002158">
    <property type="entry name" value="Ribosomal_L2"/>
    <property type="match status" value="1"/>
</dbReference>
<dbReference type="SMART" id="SM01383">
    <property type="entry name" value="Ribosomal_L2"/>
    <property type="match status" value="1"/>
</dbReference>
<dbReference type="SMART" id="SM01382">
    <property type="entry name" value="Ribosomal_L2_C"/>
    <property type="match status" value="1"/>
</dbReference>
<dbReference type="SUPFAM" id="SSF50249">
    <property type="entry name" value="Nucleic acid-binding proteins"/>
    <property type="match status" value="1"/>
</dbReference>
<dbReference type="SUPFAM" id="SSF50104">
    <property type="entry name" value="Translation proteins SH3-like domain"/>
    <property type="match status" value="1"/>
</dbReference>
<dbReference type="PROSITE" id="PS00467">
    <property type="entry name" value="RIBOSOMAL_L2"/>
    <property type="match status" value="1"/>
</dbReference>
<sequence length="273" mass="29579">MAIVKCKPTSAGRRFVVKVVNQELHKGAPYAPLLEKKSKSGGRNNNGRITTRHIGGGHKQHYRLVDFRRNKDGIPAIVERVEYDPNRTAHIALLKYADGERRYIIAPKGVAAGDQLISGIGAPIKAGNSMPLRNIPVGSTVHGIELKPGKGAQIARSAGASAQLVAREGAYVTLRLRSGEMRKVLAECRATLGEVSNSEHSLRSLGKAGATRWRGVRPTVRGVAMNPVDHPHGGGEGRTSAGRHPVSPWGLQTKGKKTRSNKRTDNMIVRRRK</sequence>
<organism>
    <name type="scientific">Pseudomonas aeruginosa (strain UCBPP-PA14)</name>
    <dbReference type="NCBI Taxonomy" id="208963"/>
    <lineage>
        <taxon>Bacteria</taxon>
        <taxon>Pseudomonadati</taxon>
        <taxon>Pseudomonadota</taxon>
        <taxon>Gammaproteobacteria</taxon>
        <taxon>Pseudomonadales</taxon>
        <taxon>Pseudomonadaceae</taxon>
        <taxon>Pseudomonas</taxon>
    </lineage>
</organism>
<feature type="chain" id="PRO_0000309987" description="Large ribosomal subunit protein uL2">
    <location>
        <begin position="1"/>
        <end position="273"/>
    </location>
</feature>
<feature type="region of interest" description="Disordered" evidence="2">
    <location>
        <begin position="34"/>
        <end position="54"/>
    </location>
</feature>
<feature type="region of interest" description="Disordered" evidence="2">
    <location>
        <begin position="223"/>
        <end position="273"/>
    </location>
</feature>
<comment type="function">
    <text evidence="1">One of the primary rRNA binding proteins. Required for association of the 30S and 50S subunits to form the 70S ribosome, for tRNA binding and peptide bond formation. It has been suggested to have peptidyltransferase activity; this is somewhat controversial. Makes several contacts with the 16S rRNA in the 70S ribosome.</text>
</comment>
<comment type="subunit">
    <text evidence="1">Part of the 50S ribosomal subunit. Forms a bridge to the 30S subunit in the 70S ribosome.</text>
</comment>
<comment type="similarity">
    <text evidence="1">Belongs to the universal ribosomal protein uL2 family.</text>
</comment>
<protein>
    <recommendedName>
        <fullName evidence="1">Large ribosomal subunit protein uL2</fullName>
    </recommendedName>
    <alternativeName>
        <fullName evidence="3">50S ribosomal protein L2</fullName>
    </alternativeName>
</protein>
<reference key="1">
    <citation type="journal article" date="2006" name="Genome Biol.">
        <title>Genomic analysis reveals that Pseudomonas aeruginosa virulence is combinatorial.</title>
        <authorList>
            <person name="Lee D.G."/>
            <person name="Urbach J.M."/>
            <person name="Wu G."/>
            <person name="Liberati N.T."/>
            <person name="Feinbaum R.L."/>
            <person name="Miyata S."/>
            <person name="Diggins L.T."/>
            <person name="He J."/>
            <person name="Saucier M."/>
            <person name="Deziel E."/>
            <person name="Friedman L."/>
            <person name="Li L."/>
            <person name="Grills G."/>
            <person name="Montgomery K."/>
            <person name="Kucherlapati R."/>
            <person name="Rahme L.G."/>
            <person name="Ausubel F.M."/>
        </authorList>
    </citation>
    <scope>NUCLEOTIDE SEQUENCE [LARGE SCALE GENOMIC DNA]</scope>
    <source>
        <strain>UCBPP-PA14</strain>
    </source>
</reference>
<proteinExistence type="inferred from homology"/>
<gene>
    <name evidence="1" type="primary">rplB</name>
    <name type="ordered locus">PA14_08880</name>
</gene>
<name>RL2_PSEAB</name>